<gene>
    <name evidence="1" type="primary">rsmA</name>
    <name evidence="1" type="synonym">ksgA</name>
    <name type="ordered locus">GSU1864</name>
</gene>
<proteinExistence type="inferred from homology"/>
<comment type="function">
    <text evidence="1">Specifically dimethylates two adjacent adenosines (A1518 and A1519) in the loop of a conserved hairpin near the 3'-end of 16S rRNA in the 30S particle. May play a critical role in biogenesis of 30S subunits.</text>
</comment>
<comment type="catalytic activity">
    <reaction evidence="1">
        <text>adenosine(1518)/adenosine(1519) in 16S rRNA + 4 S-adenosyl-L-methionine = N(6)-dimethyladenosine(1518)/N(6)-dimethyladenosine(1519) in 16S rRNA + 4 S-adenosyl-L-homocysteine + 4 H(+)</text>
        <dbReference type="Rhea" id="RHEA:19609"/>
        <dbReference type="Rhea" id="RHEA-COMP:10232"/>
        <dbReference type="Rhea" id="RHEA-COMP:10233"/>
        <dbReference type="ChEBI" id="CHEBI:15378"/>
        <dbReference type="ChEBI" id="CHEBI:57856"/>
        <dbReference type="ChEBI" id="CHEBI:59789"/>
        <dbReference type="ChEBI" id="CHEBI:74411"/>
        <dbReference type="ChEBI" id="CHEBI:74493"/>
        <dbReference type="EC" id="2.1.1.182"/>
    </reaction>
</comment>
<comment type="subcellular location">
    <subcellularLocation>
        <location evidence="1">Cytoplasm</location>
    </subcellularLocation>
</comment>
<comment type="similarity">
    <text evidence="1">Belongs to the class I-like SAM-binding methyltransferase superfamily. rRNA adenine N(6)-methyltransferase family. RsmA subfamily.</text>
</comment>
<evidence type="ECO:0000255" key="1">
    <source>
        <dbReference type="HAMAP-Rule" id="MF_00607"/>
    </source>
</evidence>
<sequence>MRGDGIRARKALGQNFLTDRSVLSRIAALVSAGAGERILEIGPGKGALTSYLAEQAGQLVAVELDDRLVPLLRGSFAGNPSVTIIEGDILDLDLRETLGRYGTPPWKVAANLPYNISTPVLFRLLDARDLFSRLVLMLQKEVGNRLAAGPGSKEYGVLSVLFQLHFDVTREILVRPGSFHPVPKVDSVVLLFVPLAQPRVDVGDEDYFRRVVKASFAMRRKTLWNCLKGGALGVPTDGIRDVLARCGIDEGRRGETLSLQEFASLTKGLLAAGGSL</sequence>
<dbReference type="EC" id="2.1.1.182" evidence="1"/>
<dbReference type="EMBL" id="AE017180">
    <property type="protein sequence ID" value="AAR35240.1"/>
    <property type="molecule type" value="Genomic_DNA"/>
</dbReference>
<dbReference type="RefSeq" id="NP_952913.1">
    <property type="nucleotide sequence ID" value="NC_002939.5"/>
</dbReference>
<dbReference type="RefSeq" id="WP_010942509.1">
    <property type="nucleotide sequence ID" value="NC_002939.5"/>
</dbReference>
<dbReference type="SMR" id="Q74C12"/>
<dbReference type="FunCoup" id="Q74C12">
    <property type="interactions" value="506"/>
</dbReference>
<dbReference type="STRING" id="243231.GSU1864"/>
<dbReference type="EnsemblBacteria" id="AAR35240">
    <property type="protein sequence ID" value="AAR35240"/>
    <property type="gene ID" value="GSU1864"/>
</dbReference>
<dbReference type="KEGG" id="gsu:GSU1864"/>
<dbReference type="PATRIC" id="fig|243231.5.peg.1902"/>
<dbReference type="eggNOG" id="COG0030">
    <property type="taxonomic scope" value="Bacteria"/>
</dbReference>
<dbReference type="HOGENOM" id="CLU_041220_0_1_7"/>
<dbReference type="InParanoid" id="Q74C12"/>
<dbReference type="OrthoDB" id="9814755at2"/>
<dbReference type="Proteomes" id="UP000000577">
    <property type="component" value="Chromosome"/>
</dbReference>
<dbReference type="GO" id="GO:0005829">
    <property type="term" value="C:cytosol"/>
    <property type="evidence" value="ECO:0000318"/>
    <property type="project" value="GO_Central"/>
</dbReference>
<dbReference type="GO" id="GO:0052908">
    <property type="term" value="F:16S rRNA (adenine(1518)-N(6)/adenine(1519)-N(6))-dimethyltransferase activity"/>
    <property type="evidence" value="ECO:0007669"/>
    <property type="project" value="UniProtKB-EC"/>
</dbReference>
<dbReference type="GO" id="GO:0003723">
    <property type="term" value="F:RNA binding"/>
    <property type="evidence" value="ECO:0007669"/>
    <property type="project" value="UniProtKB-KW"/>
</dbReference>
<dbReference type="GO" id="GO:0000179">
    <property type="term" value="F:rRNA (adenine-N6,N6-)-dimethyltransferase activity"/>
    <property type="evidence" value="ECO:0000318"/>
    <property type="project" value="GO_Central"/>
</dbReference>
<dbReference type="GO" id="GO:0031167">
    <property type="term" value="P:rRNA methylation"/>
    <property type="evidence" value="ECO:0000318"/>
    <property type="project" value="GO_Central"/>
</dbReference>
<dbReference type="CDD" id="cd02440">
    <property type="entry name" value="AdoMet_MTases"/>
    <property type="match status" value="1"/>
</dbReference>
<dbReference type="Gene3D" id="1.10.8.100">
    <property type="entry name" value="Ribosomal RNA adenine dimethylase-like, domain 2"/>
    <property type="match status" value="1"/>
</dbReference>
<dbReference type="Gene3D" id="3.40.50.150">
    <property type="entry name" value="Vaccinia Virus protein VP39"/>
    <property type="match status" value="1"/>
</dbReference>
<dbReference type="HAMAP" id="MF_00607">
    <property type="entry name" value="16SrRNA_methyltr_A"/>
    <property type="match status" value="1"/>
</dbReference>
<dbReference type="InterPro" id="IPR001737">
    <property type="entry name" value="KsgA/Erm"/>
</dbReference>
<dbReference type="InterPro" id="IPR023165">
    <property type="entry name" value="rRNA_Ade_diMease-like_C"/>
</dbReference>
<dbReference type="InterPro" id="IPR020596">
    <property type="entry name" value="rRNA_Ade_Mease_Trfase_CS"/>
</dbReference>
<dbReference type="InterPro" id="IPR020598">
    <property type="entry name" value="rRNA_Ade_methylase_Trfase_N"/>
</dbReference>
<dbReference type="InterPro" id="IPR011530">
    <property type="entry name" value="rRNA_adenine_dimethylase"/>
</dbReference>
<dbReference type="InterPro" id="IPR029063">
    <property type="entry name" value="SAM-dependent_MTases_sf"/>
</dbReference>
<dbReference type="NCBIfam" id="TIGR00755">
    <property type="entry name" value="ksgA"/>
    <property type="match status" value="1"/>
</dbReference>
<dbReference type="PANTHER" id="PTHR11727">
    <property type="entry name" value="DIMETHYLADENOSINE TRANSFERASE"/>
    <property type="match status" value="1"/>
</dbReference>
<dbReference type="PANTHER" id="PTHR11727:SF7">
    <property type="entry name" value="DIMETHYLADENOSINE TRANSFERASE-RELATED"/>
    <property type="match status" value="1"/>
</dbReference>
<dbReference type="Pfam" id="PF00398">
    <property type="entry name" value="RrnaAD"/>
    <property type="match status" value="1"/>
</dbReference>
<dbReference type="SMART" id="SM00650">
    <property type="entry name" value="rADc"/>
    <property type="match status" value="1"/>
</dbReference>
<dbReference type="SUPFAM" id="SSF53335">
    <property type="entry name" value="S-adenosyl-L-methionine-dependent methyltransferases"/>
    <property type="match status" value="1"/>
</dbReference>
<dbReference type="PROSITE" id="PS01131">
    <property type="entry name" value="RRNA_A_DIMETH"/>
    <property type="match status" value="1"/>
</dbReference>
<dbReference type="PROSITE" id="PS51689">
    <property type="entry name" value="SAM_RNA_A_N6_MT"/>
    <property type="match status" value="1"/>
</dbReference>
<feature type="chain" id="PRO_0000101534" description="Ribosomal RNA small subunit methyltransferase A">
    <location>
        <begin position="1"/>
        <end position="276"/>
    </location>
</feature>
<feature type="binding site" evidence="1">
    <location>
        <position position="15"/>
    </location>
    <ligand>
        <name>S-adenosyl-L-methionine</name>
        <dbReference type="ChEBI" id="CHEBI:59789"/>
    </ligand>
</feature>
<feature type="binding site" evidence="1">
    <location>
        <position position="17"/>
    </location>
    <ligand>
        <name>S-adenosyl-L-methionine</name>
        <dbReference type="ChEBI" id="CHEBI:59789"/>
    </ligand>
</feature>
<feature type="binding site" evidence="1">
    <location>
        <position position="42"/>
    </location>
    <ligand>
        <name>S-adenosyl-L-methionine</name>
        <dbReference type="ChEBI" id="CHEBI:59789"/>
    </ligand>
</feature>
<feature type="binding site" evidence="1">
    <location>
        <position position="63"/>
    </location>
    <ligand>
        <name>S-adenosyl-L-methionine</name>
        <dbReference type="ChEBI" id="CHEBI:59789"/>
    </ligand>
</feature>
<feature type="binding site" evidence="1">
    <location>
        <position position="88"/>
    </location>
    <ligand>
        <name>S-adenosyl-L-methionine</name>
        <dbReference type="ChEBI" id="CHEBI:59789"/>
    </ligand>
</feature>
<feature type="binding site" evidence="1">
    <location>
        <position position="111"/>
    </location>
    <ligand>
        <name>S-adenosyl-L-methionine</name>
        <dbReference type="ChEBI" id="CHEBI:59789"/>
    </ligand>
</feature>
<organism>
    <name type="scientific">Geobacter sulfurreducens (strain ATCC 51573 / DSM 12127 / PCA)</name>
    <dbReference type="NCBI Taxonomy" id="243231"/>
    <lineage>
        <taxon>Bacteria</taxon>
        <taxon>Pseudomonadati</taxon>
        <taxon>Thermodesulfobacteriota</taxon>
        <taxon>Desulfuromonadia</taxon>
        <taxon>Geobacterales</taxon>
        <taxon>Geobacteraceae</taxon>
        <taxon>Geobacter</taxon>
    </lineage>
</organism>
<keyword id="KW-0963">Cytoplasm</keyword>
<keyword id="KW-0489">Methyltransferase</keyword>
<keyword id="KW-1185">Reference proteome</keyword>
<keyword id="KW-0694">RNA-binding</keyword>
<keyword id="KW-0698">rRNA processing</keyword>
<keyword id="KW-0949">S-adenosyl-L-methionine</keyword>
<keyword id="KW-0808">Transferase</keyword>
<reference key="1">
    <citation type="journal article" date="2003" name="Science">
        <title>Genome of Geobacter sulfurreducens: metal reduction in subsurface environments.</title>
        <authorList>
            <person name="Methe B.A."/>
            <person name="Nelson K.E."/>
            <person name="Eisen J.A."/>
            <person name="Paulsen I.T."/>
            <person name="Nelson W.C."/>
            <person name="Heidelberg J.F."/>
            <person name="Wu D."/>
            <person name="Wu M."/>
            <person name="Ward N.L."/>
            <person name="Beanan M.J."/>
            <person name="Dodson R.J."/>
            <person name="Madupu R."/>
            <person name="Brinkac L.M."/>
            <person name="Daugherty S.C."/>
            <person name="DeBoy R.T."/>
            <person name="Durkin A.S."/>
            <person name="Gwinn M.L."/>
            <person name="Kolonay J.F."/>
            <person name="Sullivan S.A."/>
            <person name="Haft D.H."/>
            <person name="Selengut J."/>
            <person name="Davidsen T.M."/>
            <person name="Zafar N."/>
            <person name="White O."/>
            <person name="Tran B."/>
            <person name="Romero C."/>
            <person name="Forberger H.A."/>
            <person name="Weidman J.F."/>
            <person name="Khouri H.M."/>
            <person name="Feldblyum T.V."/>
            <person name="Utterback T.R."/>
            <person name="Van Aken S.E."/>
            <person name="Lovley D.R."/>
            <person name="Fraser C.M."/>
        </authorList>
    </citation>
    <scope>NUCLEOTIDE SEQUENCE [LARGE SCALE GENOMIC DNA]</scope>
    <source>
        <strain>ATCC 51573 / DSM 12127 / PCA</strain>
    </source>
</reference>
<protein>
    <recommendedName>
        <fullName evidence="1">Ribosomal RNA small subunit methyltransferase A</fullName>
        <ecNumber evidence="1">2.1.1.182</ecNumber>
    </recommendedName>
    <alternativeName>
        <fullName evidence="1">16S rRNA (adenine(1518)-N(6)/adenine(1519)-N(6))-dimethyltransferase</fullName>
    </alternativeName>
    <alternativeName>
        <fullName evidence="1">16S rRNA dimethyladenosine transferase</fullName>
    </alternativeName>
    <alternativeName>
        <fullName evidence="1">16S rRNA dimethylase</fullName>
    </alternativeName>
    <alternativeName>
        <fullName evidence="1">S-adenosylmethionine-6-N', N'-adenosyl(rRNA) dimethyltransferase</fullName>
    </alternativeName>
</protein>
<accession>Q74C12</accession>
<name>RSMA_GEOSL</name>